<organism>
    <name type="scientific">Picrophilus torridus (strain ATCC 700027 / DSM 9790 / JCM 10055 / NBRC 100828 / KAW 2/3)</name>
    <dbReference type="NCBI Taxonomy" id="1122961"/>
    <lineage>
        <taxon>Archaea</taxon>
        <taxon>Methanobacteriati</taxon>
        <taxon>Thermoplasmatota</taxon>
        <taxon>Thermoplasmata</taxon>
        <taxon>Thermoplasmatales</taxon>
        <taxon>Picrophilaceae</taxon>
        <taxon>Picrophilus</taxon>
    </lineage>
</organism>
<protein>
    <recommendedName>
        <fullName evidence="1">Putative HTH-type transcriptional regulatory protein PTO0557</fullName>
    </recommendedName>
</protein>
<sequence length="311" mass="36032">MDYRHDLIIKLYDALIKNGFNVSEPDLYGLVTFDLICRRNDEKYIIKVLYNIDTFSRLSISSLMAMASVTKSSIIVIGEKSGSGRLEDGILYYRHHIPIMSFKTFIDYINGESPYIYSAPGGYYVSIDGDKMRRIRELKGYSVGYLSSKLGISRRSISLYESGSSATIDIYLKLEETLGEDLTKDIDIRNEKYDYNIKDDIKDVFIRETFQMLSALGYSYEYIKKSPFDGFSYDPETMFMLGIFNNYMENERIISIKKISQVLNNIPLIIQKEYTEKENIYGCPVVSISELRSMGSMYAFKKLVEKRYSYD</sequence>
<dbReference type="EMBL" id="AE017261">
    <property type="protein sequence ID" value="AAT43142.1"/>
    <property type="molecule type" value="Genomic_DNA"/>
</dbReference>
<dbReference type="RefSeq" id="WP_011177358.1">
    <property type="nucleotide sequence ID" value="NC_005877.1"/>
</dbReference>
<dbReference type="SMR" id="Q6L1L0"/>
<dbReference type="STRING" id="263820.PTO0557"/>
<dbReference type="PaxDb" id="263820-PTO0557"/>
<dbReference type="GeneID" id="2843930"/>
<dbReference type="KEGG" id="pto:PTO0557"/>
<dbReference type="eggNOG" id="arCOG04152">
    <property type="taxonomic scope" value="Archaea"/>
</dbReference>
<dbReference type="HOGENOM" id="CLU_075726_0_0_2"/>
<dbReference type="InParanoid" id="Q6L1L0"/>
<dbReference type="OrthoDB" id="31424at2157"/>
<dbReference type="Proteomes" id="UP000000438">
    <property type="component" value="Chromosome"/>
</dbReference>
<dbReference type="GO" id="GO:0003677">
    <property type="term" value="F:DNA binding"/>
    <property type="evidence" value="ECO:0007669"/>
    <property type="project" value="UniProtKB-KW"/>
</dbReference>
<dbReference type="GO" id="GO:0003700">
    <property type="term" value="F:DNA-binding transcription factor activity"/>
    <property type="evidence" value="ECO:0007669"/>
    <property type="project" value="UniProtKB-UniRule"/>
</dbReference>
<dbReference type="CDD" id="cd00093">
    <property type="entry name" value="HTH_XRE"/>
    <property type="match status" value="1"/>
</dbReference>
<dbReference type="Gene3D" id="1.10.260.40">
    <property type="entry name" value="lambda repressor-like DNA-binding domains"/>
    <property type="match status" value="1"/>
</dbReference>
<dbReference type="HAMAP" id="MF_00584">
    <property type="entry name" value="HTH_type_cro_C1"/>
    <property type="match status" value="1"/>
</dbReference>
<dbReference type="InterPro" id="IPR020886">
    <property type="entry name" value="Arc_TR_HTH"/>
</dbReference>
<dbReference type="InterPro" id="IPR001387">
    <property type="entry name" value="Cro/C1-type_HTH"/>
</dbReference>
<dbReference type="InterPro" id="IPR010982">
    <property type="entry name" value="Lambda_DNA-bd_dom_sf"/>
</dbReference>
<dbReference type="NCBIfam" id="NF003162">
    <property type="entry name" value="PRK04140.1"/>
    <property type="match status" value="1"/>
</dbReference>
<dbReference type="Pfam" id="PF01381">
    <property type="entry name" value="HTH_3"/>
    <property type="match status" value="1"/>
</dbReference>
<dbReference type="SMART" id="SM00530">
    <property type="entry name" value="HTH_XRE"/>
    <property type="match status" value="1"/>
</dbReference>
<dbReference type="SUPFAM" id="SSF47413">
    <property type="entry name" value="lambda repressor-like DNA-binding domains"/>
    <property type="match status" value="1"/>
</dbReference>
<dbReference type="PROSITE" id="PS50943">
    <property type="entry name" value="HTH_CROC1"/>
    <property type="match status" value="1"/>
</dbReference>
<feature type="chain" id="PRO_0000259354" description="Putative HTH-type transcriptional regulatory protein PTO0557">
    <location>
        <begin position="1"/>
        <end position="311"/>
    </location>
</feature>
<feature type="domain" description="HTH cro/C1-type" evidence="1">
    <location>
        <begin position="132"/>
        <end position="186"/>
    </location>
</feature>
<feature type="DNA-binding region" description="H-T-H motif" evidence="1">
    <location>
        <begin position="143"/>
        <end position="162"/>
    </location>
</feature>
<keyword id="KW-0238">DNA-binding</keyword>
<keyword id="KW-0804">Transcription</keyword>
<keyword id="KW-0805">Transcription regulation</keyword>
<reference key="1">
    <citation type="journal article" date="2004" name="Proc. Natl. Acad. Sci. U.S.A.">
        <title>Genome sequence of Picrophilus torridus and its implications for life around pH 0.</title>
        <authorList>
            <person name="Fuetterer O."/>
            <person name="Angelov A."/>
            <person name="Liesegang H."/>
            <person name="Gottschalk G."/>
            <person name="Schleper C."/>
            <person name="Schepers B."/>
            <person name="Dock C."/>
            <person name="Antranikian G."/>
            <person name="Liebl W."/>
        </authorList>
    </citation>
    <scope>NUCLEOTIDE SEQUENCE [LARGE SCALE GENOMIC DNA]</scope>
    <source>
        <strain>ATCC 700027 / DSM 9790 / JCM 10055 / NBRC 100828 / KAW 2/3</strain>
    </source>
</reference>
<evidence type="ECO:0000255" key="1">
    <source>
        <dbReference type="HAMAP-Rule" id="MF_00584"/>
    </source>
</evidence>
<name>Y557_PICTO</name>
<proteinExistence type="inferred from homology"/>
<gene>
    <name type="ordered locus">PTO0557</name>
</gene>
<accession>Q6L1L0</accession>